<gene>
    <name type="ordered locus">MJ1182</name>
</gene>
<accession>Q58582</accession>
<reference key="1">
    <citation type="journal article" date="1996" name="Science">
        <title>Complete genome sequence of the methanogenic archaeon, Methanococcus jannaschii.</title>
        <authorList>
            <person name="Bult C.J."/>
            <person name="White O."/>
            <person name="Olsen G.J."/>
            <person name="Zhou L."/>
            <person name="Fleischmann R.D."/>
            <person name="Sutton G.G."/>
            <person name="Blake J.A."/>
            <person name="FitzGerald L.M."/>
            <person name="Clayton R.A."/>
            <person name="Gocayne J.D."/>
            <person name="Kerlavage A.R."/>
            <person name="Dougherty B.A."/>
            <person name="Tomb J.-F."/>
            <person name="Adams M.D."/>
            <person name="Reich C.I."/>
            <person name="Overbeek R."/>
            <person name="Kirkness E.F."/>
            <person name="Weinstock K.G."/>
            <person name="Merrick J.M."/>
            <person name="Glodek A."/>
            <person name="Scott J.L."/>
            <person name="Geoghagen N.S.M."/>
            <person name="Weidman J.F."/>
            <person name="Fuhrmann J.L."/>
            <person name="Nguyen D."/>
            <person name="Utterback T.R."/>
            <person name="Kelley J.M."/>
            <person name="Peterson J.D."/>
            <person name="Sadow P.W."/>
            <person name="Hanna M.C."/>
            <person name="Cotton M.D."/>
            <person name="Roberts K.M."/>
            <person name="Hurst M.A."/>
            <person name="Kaine B.P."/>
            <person name="Borodovsky M."/>
            <person name="Klenk H.-P."/>
            <person name="Fraser C.M."/>
            <person name="Smith H.O."/>
            <person name="Woese C.R."/>
            <person name="Venter J.C."/>
        </authorList>
    </citation>
    <scope>NUCLEOTIDE SEQUENCE [LARGE SCALE GENOMIC DNA]</scope>
    <source>
        <strain>ATCC 43067 / DSM 2661 / JAL-1 / JCM 10045 / NBRC 100440</strain>
    </source>
</reference>
<proteinExistence type="predicted"/>
<name>Y1182_METJA</name>
<keyword id="KW-1185">Reference proteome</keyword>
<dbReference type="EMBL" id="L77117">
    <property type="protein sequence ID" value="AAB99183.1"/>
    <property type="molecule type" value="Genomic_DNA"/>
</dbReference>
<dbReference type="PIR" id="E64447">
    <property type="entry name" value="E64447"/>
</dbReference>
<dbReference type="RefSeq" id="WP_010870695.1">
    <property type="nucleotide sequence ID" value="NC_000909.1"/>
</dbReference>
<dbReference type="SMR" id="Q58582"/>
<dbReference type="STRING" id="243232.MJ_1182"/>
<dbReference type="PaxDb" id="243232-MJ_1182"/>
<dbReference type="EnsemblBacteria" id="AAB99183">
    <property type="protein sequence ID" value="AAB99183"/>
    <property type="gene ID" value="MJ_1182"/>
</dbReference>
<dbReference type="GeneID" id="1452080"/>
<dbReference type="KEGG" id="mja:MJ_1182"/>
<dbReference type="eggNOG" id="arCOG00570">
    <property type="taxonomic scope" value="Archaea"/>
</dbReference>
<dbReference type="HOGENOM" id="CLU_777578_0_0_2"/>
<dbReference type="InParanoid" id="Q58582"/>
<dbReference type="OrthoDB" id="6062at2157"/>
<dbReference type="PhylomeDB" id="Q58582"/>
<dbReference type="Proteomes" id="UP000000805">
    <property type="component" value="Chromosome"/>
</dbReference>
<dbReference type="Gene3D" id="3.50.50.60">
    <property type="entry name" value="FAD/NAD(P)-binding domain"/>
    <property type="match status" value="1"/>
</dbReference>
<dbReference type="InterPro" id="IPR036188">
    <property type="entry name" value="FAD/NAD-bd_sf"/>
</dbReference>
<dbReference type="InterPro" id="IPR050407">
    <property type="entry name" value="Geranylgeranyl_reductase"/>
</dbReference>
<dbReference type="PANTHER" id="PTHR42685:SF21">
    <property type="entry name" value="DEHYDROGENASE (FLAVOPROTEIN)-LIKE PROTEIN"/>
    <property type="match status" value="1"/>
</dbReference>
<dbReference type="PANTHER" id="PTHR42685">
    <property type="entry name" value="GERANYLGERANYL DIPHOSPHATE REDUCTASE"/>
    <property type="match status" value="1"/>
</dbReference>
<dbReference type="SUPFAM" id="SSF51905">
    <property type="entry name" value="FAD/NAD(P)-binding domain"/>
    <property type="match status" value="1"/>
</dbReference>
<protein>
    <recommendedName>
        <fullName>Uncharacterized protein MJ1182</fullName>
    </recommendedName>
</protein>
<organism>
    <name type="scientific">Methanocaldococcus jannaschii (strain ATCC 43067 / DSM 2661 / JAL-1 / JCM 10045 / NBRC 100440)</name>
    <name type="common">Methanococcus jannaschii</name>
    <dbReference type="NCBI Taxonomy" id="243232"/>
    <lineage>
        <taxon>Archaea</taxon>
        <taxon>Methanobacteriati</taxon>
        <taxon>Methanobacteriota</taxon>
        <taxon>Methanomada group</taxon>
        <taxon>Methanococci</taxon>
        <taxon>Methanococcales</taxon>
        <taxon>Methanocaldococcaceae</taxon>
        <taxon>Methanocaldococcus</taxon>
    </lineage>
</organism>
<feature type="chain" id="PRO_0000107205" description="Uncharacterized protein MJ1182">
    <location>
        <begin position="1"/>
        <end position="366"/>
    </location>
</feature>
<sequence length="366" mass="42216">MQVCIIGAGLSGSILYRLLSEDGFYINIYDHVLVRGCKSMNFIFSNKNEILTVKKVLKTVNINIKDYIIREIKEVNIGGDNYYPNKKIYVINKSKLIEDLVPRTVVTNREFNPVIRRYTTKVIDTGVIVREFNTEAETKFYDLVVDASGCAKVLQLGNVYDKYKNDIKTCQFLIAYENEESPEKFDKFFIDEIKIHKGKPMIGYTWITPIDDGLYHVGCAYYKNDHELWTYLTKYTKKMFGSDYVRVCGCTSKINGNLISESFIGGIYEKRCVAGVGESIGLTTPLGHGNIYAIISAYILSRFIKKYDLNEAVLKYKDYIPKKFAELDKEKKAVRNFNVLRITKLLRDYYNIPAHESMKIILKSLY</sequence>